<sequence length="163" mass="18421">MEQKVSADVLLNKYQTSISITKNLINSWLGNENTSVSSDEKNDDPPLQARPPRLGLGASRKDQSENSWVTSKNEKLKSLPPALKKKIERQLQKKKEAEKIEGGKNHDNLKRKLNKVGDELNEQQSDTDDDDDDSKARITSRSKRANAQSSGFDIYKKLGKKKR</sequence>
<gene>
    <name type="ORF">SPAPB1E7.01c</name>
</gene>
<evidence type="ECO:0000256" key="1">
    <source>
        <dbReference type="SAM" id="MobiDB-lite"/>
    </source>
</evidence>
<evidence type="ECO:0000269" key="2">
    <source>
    </source>
</evidence>
<evidence type="ECO:0000269" key="3">
    <source>
    </source>
</evidence>
<keyword id="KW-0539">Nucleus</keyword>
<keyword id="KW-0597">Phosphoprotein</keyword>
<keyword id="KW-1185">Reference proteome</keyword>
<protein>
    <recommendedName>
        <fullName>Uncharacterized protein PB1E7.01c</fullName>
    </recommendedName>
</protein>
<reference key="1">
    <citation type="journal article" date="2002" name="Nature">
        <title>The genome sequence of Schizosaccharomyces pombe.</title>
        <authorList>
            <person name="Wood V."/>
            <person name="Gwilliam R."/>
            <person name="Rajandream M.A."/>
            <person name="Lyne M.H."/>
            <person name="Lyne R."/>
            <person name="Stewart A."/>
            <person name="Sgouros J.G."/>
            <person name="Peat N."/>
            <person name="Hayles J."/>
            <person name="Baker S.G."/>
            <person name="Basham D."/>
            <person name="Bowman S."/>
            <person name="Brooks K."/>
            <person name="Brown D."/>
            <person name="Brown S."/>
            <person name="Chillingworth T."/>
            <person name="Churcher C.M."/>
            <person name="Collins M."/>
            <person name="Connor R."/>
            <person name="Cronin A."/>
            <person name="Davis P."/>
            <person name="Feltwell T."/>
            <person name="Fraser A."/>
            <person name="Gentles S."/>
            <person name="Goble A."/>
            <person name="Hamlin N."/>
            <person name="Harris D.E."/>
            <person name="Hidalgo J."/>
            <person name="Hodgson G."/>
            <person name="Holroyd S."/>
            <person name="Hornsby T."/>
            <person name="Howarth S."/>
            <person name="Huckle E.J."/>
            <person name="Hunt S."/>
            <person name="Jagels K."/>
            <person name="James K.D."/>
            <person name="Jones L."/>
            <person name="Jones M."/>
            <person name="Leather S."/>
            <person name="McDonald S."/>
            <person name="McLean J."/>
            <person name="Mooney P."/>
            <person name="Moule S."/>
            <person name="Mungall K.L."/>
            <person name="Murphy L.D."/>
            <person name="Niblett D."/>
            <person name="Odell C."/>
            <person name="Oliver K."/>
            <person name="O'Neil S."/>
            <person name="Pearson D."/>
            <person name="Quail M.A."/>
            <person name="Rabbinowitsch E."/>
            <person name="Rutherford K.M."/>
            <person name="Rutter S."/>
            <person name="Saunders D."/>
            <person name="Seeger K."/>
            <person name="Sharp S."/>
            <person name="Skelton J."/>
            <person name="Simmonds M.N."/>
            <person name="Squares R."/>
            <person name="Squares S."/>
            <person name="Stevens K."/>
            <person name="Taylor K."/>
            <person name="Taylor R.G."/>
            <person name="Tivey A."/>
            <person name="Walsh S.V."/>
            <person name="Warren T."/>
            <person name="Whitehead S."/>
            <person name="Woodward J.R."/>
            <person name="Volckaert G."/>
            <person name="Aert R."/>
            <person name="Robben J."/>
            <person name="Grymonprez B."/>
            <person name="Weltjens I."/>
            <person name="Vanstreels E."/>
            <person name="Rieger M."/>
            <person name="Schaefer M."/>
            <person name="Mueller-Auer S."/>
            <person name="Gabel C."/>
            <person name="Fuchs M."/>
            <person name="Duesterhoeft A."/>
            <person name="Fritzc C."/>
            <person name="Holzer E."/>
            <person name="Moestl D."/>
            <person name="Hilbert H."/>
            <person name="Borzym K."/>
            <person name="Langer I."/>
            <person name="Beck A."/>
            <person name="Lehrach H."/>
            <person name="Reinhardt R."/>
            <person name="Pohl T.M."/>
            <person name="Eger P."/>
            <person name="Zimmermann W."/>
            <person name="Wedler H."/>
            <person name="Wambutt R."/>
            <person name="Purnelle B."/>
            <person name="Goffeau A."/>
            <person name="Cadieu E."/>
            <person name="Dreano S."/>
            <person name="Gloux S."/>
            <person name="Lelaure V."/>
            <person name="Mottier S."/>
            <person name="Galibert F."/>
            <person name="Aves S.J."/>
            <person name="Xiang Z."/>
            <person name="Hunt C."/>
            <person name="Moore K."/>
            <person name="Hurst S.M."/>
            <person name="Lucas M."/>
            <person name="Rochet M."/>
            <person name="Gaillardin C."/>
            <person name="Tallada V.A."/>
            <person name="Garzon A."/>
            <person name="Thode G."/>
            <person name="Daga R.R."/>
            <person name="Cruzado L."/>
            <person name="Jimenez J."/>
            <person name="Sanchez M."/>
            <person name="del Rey F."/>
            <person name="Benito J."/>
            <person name="Dominguez A."/>
            <person name="Revuelta J.L."/>
            <person name="Moreno S."/>
            <person name="Armstrong J."/>
            <person name="Forsburg S.L."/>
            <person name="Cerutti L."/>
            <person name="Lowe T."/>
            <person name="McCombie W.R."/>
            <person name="Paulsen I."/>
            <person name="Potashkin J."/>
            <person name="Shpakovski G.V."/>
            <person name="Ussery D."/>
            <person name="Barrell B.G."/>
            <person name="Nurse P."/>
        </authorList>
    </citation>
    <scope>NUCLEOTIDE SEQUENCE [LARGE SCALE GENOMIC DNA]</scope>
    <source>
        <strain>972 / ATCC 24843</strain>
    </source>
</reference>
<reference key="2">
    <citation type="journal article" date="2006" name="Nat. Biotechnol.">
        <title>ORFeome cloning and global analysis of protein localization in the fission yeast Schizosaccharomyces pombe.</title>
        <authorList>
            <person name="Matsuyama A."/>
            <person name="Arai R."/>
            <person name="Yashiroda Y."/>
            <person name="Shirai A."/>
            <person name="Kamata A."/>
            <person name="Sekido S."/>
            <person name="Kobayashi Y."/>
            <person name="Hashimoto A."/>
            <person name="Hamamoto M."/>
            <person name="Hiraoka Y."/>
            <person name="Horinouchi S."/>
            <person name="Yoshida M."/>
        </authorList>
    </citation>
    <scope>SUBCELLULAR LOCATION [LARGE SCALE ANALYSIS]</scope>
</reference>
<reference key="3">
    <citation type="journal article" date="2008" name="J. Proteome Res.">
        <title>Phosphoproteome analysis of fission yeast.</title>
        <authorList>
            <person name="Wilson-Grady J.T."/>
            <person name="Villen J."/>
            <person name="Gygi S.P."/>
        </authorList>
    </citation>
    <scope>PHOSPHORYLATION [LARGE SCALE ANALYSIS] AT SER-125 AND THR-127</scope>
    <scope>IDENTIFICATION BY MASS SPECTROMETRY</scope>
</reference>
<organism>
    <name type="scientific">Schizosaccharomyces pombe (strain 972 / ATCC 24843)</name>
    <name type="common">Fission yeast</name>
    <dbReference type="NCBI Taxonomy" id="284812"/>
    <lineage>
        <taxon>Eukaryota</taxon>
        <taxon>Fungi</taxon>
        <taxon>Dikarya</taxon>
        <taxon>Ascomycota</taxon>
        <taxon>Taphrinomycotina</taxon>
        <taxon>Schizosaccharomycetes</taxon>
        <taxon>Schizosaccharomycetales</taxon>
        <taxon>Schizosaccharomycetaceae</taxon>
        <taxon>Schizosaccharomyces</taxon>
    </lineage>
</organism>
<comment type="subcellular location">
    <subcellularLocation>
        <location evidence="2">Nucleus</location>
        <location evidence="2">Nucleolus</location>
    </subcellularLocation>
</comment>
<accession>Q9C108</accession>
<name>YKT1_SCHPO</name>
<proteinExistence type="evidence at protein level"/>
<dbReference type="EMBL" id="CU329670">
    <property type="protein sequence ID" value="CAC36918.1"/>
    <property type="molecule type" value="Genomic_DNA"/>
</dbReference>
<dbReference type="RefSeq" id="NP_594127.1">
    <property type="nucleotide sequence ID" value="NM_001019551.2"/>
</dbReference>
<dbReference type="iPTMnet" id="Q9C108"/>
<dbReference type="PaxDb" id="4896-SPAPB1E7.01c.1"/>
<dbReference type="EnsemblFungi" id="SPAPB1E7.01c.1">
    <property type="protein sequence ID" value="SPAPB1E7.01c.1:pep"/>
    <property type="gene ID" value="SPAPB1E7.01c"/>
</dbReference>
<dbReference type="KEGG" id="spo:2543601"/>
<dbReference type="PomBase" id="SPAPB1E7.01c"/>
<dbReference type="VEuPathDB" id="FungiDB:SPAPB1E7.01c"/>
<dbReference type="HOGENOM" id="CLU_1628043_0_0_1"/>
<dbReference type="InParanoid" id="Q9C108"/>
<dbReference type="OMA" id="RCTRRIA"/>
<dbReference type="PRO" id="PR:Q9C108"/>
<dbReference type="Proteomes" id="UP000002485">
    <property type="component" value="Chromosome I"/>
</dbReference>
<dbReference type="GO" id="GO:0005730">
    <property type="term" value="C:nucleolus"/>
    <property type="evidence" value="ECO:0007005"/>
    <property type="project" value="PomBase"/>
</dbReference>
<dbReference type="GO" id="GO:0005634">
    <property type="term" value="C:nucleus"/>
    <property type="evidence" value="ECO:0007005"/>
    <property type="project" value="PomBase"/>
</dbReference>
<dbReference type="InterPro" id="IPR021641">
    <property type="entry name" value="DUF3245"/>
</dbReference>
<dbReference type="Pfam" id="PF11595">
    <property type="entry name" value="DUF3245"/>
    <property type="match status" value="1"/>
</dbReference>
<feature type="chain" id="PRO_0000373870" description="Uncharacterized protein PB1E7.01c">
    <location>
        <begin position="1"/>
        <end position="163"/>
    </location>
</feature>
<feature type="region of interest" description="Disordered" evidence="1">
    <location>
        <begin position="30"/>
        <end position="163"/>
    </location>
</feature>
<feature type="compositionally biased region" description="Basic and acidic residues" evidence="1">
    <location>
        <begin position="88"/>
        <end position="118"/>
    </location>
</feature>
<feature type="compositionally biased region" description="Acidic residues" evidence="1">
    <location>
        <begin position="119"/>
        <end position="133"/>
    </location>
</feature>
<feature type="modified residue" description="Phosphoserine" evidence="3">
    <location>
        <position position="125"/>
    </location>
</feature>
<feature type="modified residue" description="Phosphothreonine" evidence="3">
    <location>
        <position position="127"/>
    </location>
</feature>